<proteinExistence type="predicted"/>
<protein>
    <recommendedName>
        <fullName>Coat protein</fullName>
    </recommendedName>
    <alternativeName>
        <fullName>Capsid protein</fullName>
    </alternativeName>
</protein>
<evidence type="ECO:0000256" key="1">
    <source>
        <dbReference type="SAM" id="MobiDB-lite"/>
    </source>
</evidence>
<evidence type="ECO:0000305" key="2"/>
<name>COAT_TRVPL</name>
<reference key="1">
    <citation type="journal article" date="1989" name="Virology">
        <title>Genome structure of tobacco rattle virus strain PLB: further evidence on the occurrence of RNA recombination among tobraviruses.</title>
        <authorList>
            <person name="Angenent G.C."/>
            <person name="Posthumus E."/>
            <person name="Brederode F.T.M."/>
            <person name="Bol J.F."/>
        </authorList>
    </citation>
    <scope>NUCLEOTIDE SEQUENCE [GENOMIC RNA]</scope>
</reference>
<organism>
    <name type="scientific">Tobacco rattle virus (strain PLB)</name>
    <dbReference type="NCBI Taxonomy" id="33766"/>
    <lineage>
        <taxon>Viruses</taxon>
        <taxon>Riboviria</taxon>
        <taxon>Orthornavirae</taxon>
        <taxon>Kitrinoviricota</taxon>
        <taxon>Alsuviricetes</taxon>
        <taxon>Martellivirales</taxon>
        <taxon>Virgaviridae</taxon>
        <taxon>Tobravirus</taxon>
        <taxon>Tobacco rattle virus</taxon>
    </lineage>
</organism>
<keyword id="KW-0167">Capsid protein</keyword>
<keyword id="KW-0946">Virion</keyword>
<feature type="chain" id="PRO_0000222505" description="Coat protein">
    <location>
        <begin position="1"/>
        <end position="209"/>
    </location>
</feature>
<feature type="region of interest" description="Disordered" evidence="1">
    <location>
        <begin position="108"/>
        <end position="132"/>
    </location>
</feature>
<feature type="region of interest" description="Disordered" evidence="1">
    <location>
        <begin position="181"/>
        <end position="209"/>
    </location>
</feature>
<feature type="compositionally biased region" description="Low complexity" evidence="1">
    <location>
        <begin position="116"/>
        <end position="132"/>
    </location>
</feature>
<organismHost>
    <name type="scientific">Beta vulgaris</name>
    <name type="common">Sugar beet</name>
    <dbReference type="NCBI Taxonomy" id="161934"/>
</organismHost>
<organismHost>
    <name type="scientific">Capsicum annuum</name>
    <name type="common">Capsicum pepper</name>
    <dbReference type="NCBI Taxonomy" id="4072"/>
</organismHost>
<organismHost>
    <name type="scientific">Hyacinthus</name>
    <dbReference type="NCBI Taxonomy" id="82024"/>
</organismHost>
<organismHost>
    <name type="scientific">Narcissus pseudonarcissus</name>
    <name type="common">Daffodil</name>
    <dbReference type="NCBI Taxonomy" id="39639"/>
</organismHost>
<organismHost>
    <name type="scientific">Nicotiana tabacum</name>
    <name type="common">Common tobacco</name>
    <dbReference type="NCBI Taxonomy" id="4097"/>
</organismHost>
<organismHost>
    <name type="scientific">Solanum tuberosum</name>
    <name type="common">Potato</name>
    <dbReference type="NCBI Taxonomy" id="4113"/>
</organismHost>
<organismHost>
    <name type="scientific">Spinacia oleracea</name>
    <name type="common">Spinach</name>
    <dbReference type="NCBI Taxonomy" id="3562"/>
</organismHost>
<organismHost>
    <name type="scientific">Stellaria media</name>
    <name type="common">Common chickweed</name>
    <name type="synonym">Alsine media</name>
    <dbReference type="NCBI Taxonomy" id="13274"/>
</organismHost>
<organismHost>
    <name type="scientific">Tulipa</name>
    <dbReference type="NCBI Taxonomy" id="13305"/>
</organismHost>
<organismHost>
    <name type="scientific">Viola arvensis</name>
    <name type="common">European field pansy</name>
    <name type="synonym">Field violet</name>
    <dbReference type="NCBI Taxonomy" id="97415"/>
</organismHost>
<comment type="subcellular location">
    <subcellularLocation>
        <location evidence="2">Virion</location>
    </subcellularLocation>
</comment>
<accession>P69471</accession>
<accession>P05071</accession>
<dbReference type="EMBL" id="J04347">
    <property type="protein sequence ID" value="AAA47078.1"/>
    <property type="molecule type" value="Genomic_RNA"/>
</dbReference>
<dbReference type="PIR" id="A04188">
    <property type="entry name" value="VCBVCP"/>
</dbReference>
<dbReference type="SMR" id="P69471"/>
<dbReference type="GO" id="GO:0019028">
    <property type="term" value="C:viral capsid"/>
    <property type="evidence" value="ECO:0007669"/>
    <property type="project" value="UniProtKB-KW"/>
</dbReference>
<dbReference type="GO" id="GO:0005198">
    <property type="term" value="F:structural molecule activity"/>
    <property type="evidence" value="ECO:0007669"/>
    <property type="project" value="InterPro"/>
</dbReference>
<dbReference type="Gene3D" id="1.20.120.70">
    <property type="entry name" value="Tobacco mosaic virus-like, coat protein"/>
    <property type="match status" value="1"/>
</dbReference>
<dbReference type="InterPro" id="IPR001337">
    <property type="entry name" value="TMV-like_coat"/>
</dbReference>
<dbReference type="InterPro" id="IPR036417">
    <property type="entry name" value="TMV-like_coat_sf"/>
</dbReference>
<dbReference type="Pfam" id="PF00721">
    <property type="entry name" value="TMV_coat"/>
    <property type="match status" value="1"/>
</dbReference>
<dbReference type="SUPFAM" id="SSF47195">
    <property type="entry name" value="TMV-like viral coat proteins"/>
    <property type="match status" value="1"/>
</dbReference>
<sequence length="209" mass="22879">MGDMYDEQFDKAGGPADLMDDSWVESTAWKDLLKKLHSVKFALQSGRDEITGLLTTLSRQCPYSPYEQFPERKVYFLLDSRANNALGVIQNASAFKRRADEKNAVAGVTNIPANPNTTVTTNQGSTTTTKANTSSTLEEDLYTYYKFDDASTTFHKSLTSLENMQLKSYYRRNFEKNFGVKFGSASTPASGGSGATPPPASGGAVRPNP</sequence>